<evidence type="ECO:0000255" key="1">
    <source>
        <dbReference type="HAMAP-Rule" id="MF_00654"/>
    </source>
</evidence>
<accession>B0RQ27</accession>
<dbReference type="EC" id="1.3.3.11" evidence="1"/>
<dbReference type="EMBL" id="AM920689">
    <property type="protein sequence ID" value="CAP50562.1"/>
    <property type="molecule type" value="Genomic_DNA"/>
</dbReference>
<dbReference type="SMR" id="B0RQ27"/>
<dbReference type="KEGG" id="xca:xcc-b100_1214"/>
<dbReference type="HOGENOM" id="CLU_080136_0_0_6"/>
<dbReference type="UniPathway" id="UPA00539"/>
<dbReference type="Proteomes" id="UP000001188">
    <property type="component" value="Chromosome"/>
</dbReference>
<dbReference type="GO" id="GO:0033732">
    <property type="term" value="F:pyrroloquinoline-quinone synthase activity"/>
    <property type="evidence" value="ECO:0007669"/>
    <property type="project" value="UniProtKB-EC"/>
</dbReference>
<dbReference type="GO" id="GO:0018189">
    <property type="term" value="P:pyrroloquinoline quinone biosynthetic process"/>
    <property type="evidence" value="ECO:0007669"/>
    <property type="project" value="UniProtKB-UniRule"/>
</dbReference>
<dbReference type="GO" id="GO:0006790">
    <property type="term" value="P:sulfur compound metabolic process"/>
    <property type="evidence" value="ECO:0007669"/>
    <property type="project" value="UniProtKB-ARBA"/>
</dbReference>
<dbReference type="Gene3D" id="1.20.910.10">
    <property type="entry name" value="Heme oxygenase-like"/>
    <property type="match status" value="1"/>
</dbReference>
<dbReference type="HAMAP" id="MF_00654">
    <property type="entry name" value="PQQ_syn_PqqC"/>
    <property type="match status" value="1"/>
</dbReference>
<dbReference type="InterPro" id="IPR016084">
    <property type="entry name" value="Haem_Oase-like_multi-hlx"/>
</dbReference>
<dbReference type="InterPro" id="IPR011845">
    <property type="entry name" value="PqqC"/>
</dbReference>
<dbReference type="InterPro" id="IPR039068">
    <property type="entry name" value="PqqC-like"/>
</dbReference>
<dbReference type="InterPro" id="IPR004305">
    <property type="entry name" value="Thiaminase-2/PQQC"/>
</dbReference>
<dbReference type="NCBIfam" id="TIGR02111">
    <property type="entry name" value="PQQ_syn_pqqC"/>
    <property type="match status" value="1"/>
</dbReference>
<dbReference type="PANTHER" id="PTHR40279:SF3">
    <property type="entry name" value="4-AMINOBENZOATE SYNTHASE"/>
    <property type="match status" value="1"/>
</dbReference>
<dbReference type="PANTHER" id="PTHR40279">
    <property type="entry name" value="PQQC-LIKE PROTEIN"/>
    <property type="match status" value="1"/>
</dbReference>
<dbReference type="Pfam" id="PF03070">
    <property type="entry name" value="TENA_THI-4"/>
    <property type="match status" value="1"/>
</dbReference>
<dbReference type="SUPFAM" id="SSF48613">
    <property type="entry name" value="Heme oxygenase-like"/>
    <property type="match status" value="1"/>
</dbReference>
<reference key="1">
    <citation type="journal article" date="2008" name="J. Biotechnol.">
        <title>The genome of Xanthomonas campestris pv. campestris B100 and its use for the reconstruction of metabolic pathways involved in xanthan biosynthesis.</title>
        <authorList>
            <person name="Vorhoelter F.-J."/>
            <person name="Schneiker S."/>
            <person name="Goesmann A."/>
            <person name="Krause L."/>
            <person name="Bekel T."/>
            <person name="Kaiser O."/>
            <person name="Linke B."/>
            <person name="Patschkowski T."/>
            <person name="Rueckert C."/>
            <person name="Schmid J."/>
            <person name="Sidhu V.K."/>
            <person name="Sieber V."/>
            <person name="Tauch A."/>
            <person name="Watt S.A."/>
            <person name="Weisshaar B."/>
            <person name="Becker A."/>
            <person name="Niehaus K."/>
            <person name="Puehler A."/>
        </authorList>
    </citation>
    <scope>NUCLEOTIDE SEQUENCE [LARGE SCALE GENOMIC DNA]</scope>
    <source>
        <strain>B100</strain>
    </source>
</reference>
<protein>
    <recommendedName>
        <fullName evidence="1">Pyrroloquinoline-quinone synthase</fullName>
        <ecNumber evidence="1">1.3.3.11</ecNumber>
    </recommendedName>
    <alternativeName>
        <fullName evidence="1">Coenzyme PQQ synthesis protein C</fullName>
    </alternativeName>
    <alternativeName>
        <fullName evidence="1">Pyrroloquinoline quinone biosynthesis protein C</fullName>
    </alternativeName>
</protein>
<keyword id="KW-0560">Oxidoreductase</keyword>
<keyword id="KW-0884">PQQ biosynthesis</keyword>
<name>PQQC_XANCB</name>
<feature type="chain" id="PRO_1000131181" description="Pyrroloquinoline-quinone synthase">
    <location>
        <begin position="1"/>
        <end position="250"/>
    </location>
</feature>
<comment type="function">
    <text evidence="1">Ring cyclization and eight-electron oxidation of 3a-(2-amino-2-carboxyethyl)-4,5-dioxo-4,5,6,7,8,9-hexahydroquinoline-7,9-dicarboxylic-acid to PQQ.</text>
</comment>
<comment type="catalytic activity">
    <reaction evidence="1">
        <text>6-(2-amino-2-carboxyethyl)-7,8-dioxo-1,2,3,4,7,8-hexahydroquinoline-2,4-dicarboxylate + 3 O2 = pyrroloquinoline quinone + 2 H2O2 + 2 H2O + H(+)</text>
        <dbReference type="Rhea" id="RHEA:10692"/>
        <dbReference type="ChEBI" id="CHEBI:15377"/>
        <dbReference type="ChEBI" id="CHEBI:15378"/>
        <dbReference type="ChEBI" id="CHEBI:15379"/>
        <dbReference type="ChEBI" id="CHEBI:16240"/>
        <dbReference type="ChEBI" id="CHEBI:58442"/>
        <dbReference type="ChEBI" id="CHEBI:58778"/>
        <dbReference type="EC" id="1.3.3.11"/>
    </reaction>
</comment>
<comment type="pathway">
    <text evidence="1">Cofactor biosynthesis; pyrroloquinoline quinone biosynthesis.</text>
</comment>
<comment type="similarity">
    <text evidence="1">Belongs to the PqqC family.</text>
</comment>
<organism>
    <name type="scientific">Xanthomonas campestris pv. campestris (strain B100)</name>
    <dbReference type="NCBI Taxonomy" id="509169"/>
    <lineage>
        <taxon>Bacteria</taxon>
        <taxon>Pseudomonadati</taxon>
        <taxon>Pseudomonadota</taxon>
        <taxon>Gammaproteobacteria</taxon>
        <taxon>Lysobacterales</taxon>
        <taxon>Lysobacteraceae</taxon>
        <taxon>Xanthomonas</taxon>
    </lineage>
</organism>
<proteinExistence type="inferred from homology"/>
<gene>
    <name evidence="1" type="primary">pqqC</name>
    <name type="ordered locus">xcc-b100_1214</name>
</gene>
<sequence length="250" mass="28235">MTALLSPDQLEADLRAIGARLYHDQHPFHALLHHGKLDRGQVQAWALNRFEYQRCIPLKDAAILARMEDPALRRIWRQRILDHDGNSPSDGGIARWLHLTDALGLPRELVESGRALLPGTRFAVQAYLHFVREKSLLEAIASSLTELFAPNIIGQRVAGMLQHYDFVSPEALAYFEHRLTEAPRDSDFALDYVKQHADTIEKQQLVKAALHFKCSVLWAQLDALHVAYVSPGVVWPDAFVPERDSKRAAA</sequence>